<keyword id="KW-0687">Ribonucleoprotein</keyword>
<keyword id="KW-0689">Ribosomal protein</keyword>
<keyword id="KW-0694">RNA-binding</keyword>
<keyword id="KW-0699">rRNA-binding</keyword>
<evidence type="ECO:0000255" key="1">
    <source>
        <dbReference type="HAMAP-Rule" id="MF_01302"/>
    </source>
</evidence>
<evidence type="ECO:0000305" key="2"/>
<comment type="function">
    <text evidence="1">One of the primary rRNA binding proteins, it binds directly to 16S rRNA central domain where it helps coordinate assembly of the platform of the 30S subunit.</text>
</comment>
<comment type="subunit">
    <text evidence="1">Part of the 30S ribosomal subunit. Contacts proteins S5 and S12.</text>
</comment>
<comment type="similarity">
    <text evidence="1">Belongs to the universal ribosomal protein uS8 family.</text>
</comment>
<sequence>MSANDTISDMLTRIRNACAVRQTTTQIPTTRMTRSIAQVLKDEGFIADFEEVGEGIKSQLVLSLKYKGKNRQPIITTLTRVSKPGLRVYSNSKDLPRVLGGIGIAIVSTSKGIMTDREARKQNVGGEVLCYIW</sequence>
<protein>
    <recommendedName>
        <fullName evidence="1">Small ribosomal subunit protein uS8</fullName>
    </recommendedName>
    <alternativeName>
        <fullName evidence="2">30S ribosomal protein S8</fullName>
    </alternativeName>
</protein>
<dbReference type="EMBL" id="AP009552">
    <property type="protein sequence ID" value="BAG05552.1"/>
    <property type="molecule type" value="Genomic_DNA"/>
</dbReference>
<dbReference type="RefSeq" id="WP_002734721.1">
    <property type="nucleotide sequence ID" value="NC_010296.1"/>
</dbReference>
<dbReference type="SMR" id="B0JHZ0"/>
<dbReference type="STRING" id="449447.MAE_57300"/>
<dbReference type="PaxDb" id="449447-MAE_57300"/>
<dbReference type="EnsemblBacteria" id="BAG05552">
    <property type="protein sequence ID" value="BAG05552"/>
    <property type="gene ID" value="MAE_57300"/>
</dbReference>
<dbReference type="GeneID" id="66707888"/>
<dbReference type="KEGG" id="mar:MAE_57300"/>
<dbReference type="eggNOG" id="COG0096">
    <property type="taxonomic scope" value="Bacteria"/>
</dbReference>
<dbReference type="HOGENOM" id="CLU_098428_0_2_3"/>
<dbReference type="BioCyc" id="MAER449447:MAE_RS24965-MONOMER"/>
<dbReference type="Proteomes" id="UP000001510">
    <property type="component" value="Chromosome"/>
</dbReference>
<dbReference type="GO" id="GO:1990904">
    <property type="term" value="C:ribonucleoprotein complex"/>
    <property type="evidence" value="ECO:0007669"/>
    <property type="project" value="UniProtKB-KW"/>
</dbReference>
<dbReference type="GO" id="GO:0005840">
    <property type="term" value="C:ribosome"/>
    <property type="evidence" value="ECO:0007669"/>
    <property type="project" value="UniProtKB-KW"/>
</dbReference>
<dbReference type="GO" id="GO:0019843">
    <property type="term" value="F:rRNA binding"/>
    <property type="evidence" value="ECO:0007669"/>
    <property type="project" value="UniProtKB-UniRule"/>
</dbReference>
<dbReference type="GO" id="GO:0003735">
    <property type="term" value="F:structural constituent of ribosome"/>
    <property type="evidence" value="ECO:0007669"/>
    <property type="project" value="InterPro"/>
</dbReference>
<dbReference type="GO" id="GO:0006412">
    <property type="term" value="P:translation"/>
    <property type="evidence" value="ECO:0007669"/>
    <property type="project" value="UniProtKB-UniRule"/>
</dbReference>
<dbReference type="FunFam" id="3.30.1370.30:FF:000002">
    <property type="entry name" value="30S ribosomal protein S8"/>
    <property type="match status" value="1"/>
</dbReference>
<dbReference type="FunFam" id="3.30.1490.10:FF:000001">
    <property type="entry name" value="30S ribosomal protein S8"/>
    <property type="match status" value="1"/>
</dbReference>
<dbReference type="Gene3D" id="3.30.1370.30">
    <property type="match status" value="1"/>
</dbReference>
<dbReference type="Gene3D" id="3.30.1490.10">
    <property type="match status" value="1"/>
</dbReference>
<dbReference type="HAMAP" id="MF_01302_B">
    <property type="entry name" value="Ribosomal_uS8_B"/>
    <property type="match status" value="1"/>
</dbReference>
<dbReference type="InterPro" id="IPR000630">
    <property type="entry name" value="Ribosomal_uS8"/>
</dbReference>
<dbReference type="InterPro" id="IPR047863">
    <property type="entry name" value="Ribosomal_uS8_CS"/>
</dbReference>
<dbReference type="InterPro" id="IPR035987">
    <property type="entry name" value="Ribosomal_uS8_sf"/>
</dbReference>
<dbReference type="NCBIfam" id="NF001109">
    <property type="entry name" value="PRK00136.1"/>
    <property type="match status" value="1"/>
</dbReference>
<dbReference type="PANTHER" id="PTHR11758">
    <property type="entry name" value="40S RIBOSOMAL PROTEIN S15A"/>
    <property type="match status" value="1"/>
</dbReference>
<dbReference type="Pfam" id="PF00410">
    <property type="entry name" value="Ribosomal_S8"/>
    <property type="match status" value="1"/>
</dbReference>
<dbReference type="SUPFAM" id="SSF56047">
    <property type="entry name" value="Ribosomal protein S8"/>
    <property type="match status" value="1"/>
</dbReference>
<dbReference type="PROSITE" id="PS00053">
    <property type="entry name" value="RIBOSOMAL_S8"/>
    <property type="match status" value="1"/>
</dbReference>
<feature type="chain" id="PRO_1000085929" description="Small ribosomal subunit protein uS8">
    <location>
        <begin position="1"/>
        <end position="133"/>
    </location>
</feature>
<accession>B0JHZ0</accession>
<reference key="1">
    <citation type="journal article" date="2007" name="DNA Res.">
        <title>Complete genomic structure of the bloom-forming toxic cyanobacterium Microcystis aeruginosa NIES-843.</title>
        <authorList>
            <person name="Kaneko T."/>
            <person name="Nakajima N."/>
            <person name="Okamoto S."/>
            <person name="Suzuki I."/>
            <person name="Tanabe Y."/>
            <person name="Tamaoki M."/>
            <person name="Nakamura Y."/>
            <person name="Kasai F."/>
            <person name="Watanabe A."/>
            <person name="Kawashima K."/>
            <person name="Kishida Y."/>
            <person name="Ono A."/>
            <person name="Shimizu Y."/>
            <person name="Takahashi C."/>
            <person name="Minami C."/>
            <person name="Fujishiro T."/>
            <person name="Kohara M."/>
            <person name="Katoh M."/>
            <person name="Nakazaki N."/>
            <person name="Nakayama S."/>
            <person name="Yamada M."/>
            <person name="Tabata S."/>
            <person name="Watanabe M.M."/>
        </authorList>
    </citation>
    <scope>NUCLEOTIDE SEQUENCE [LARGE SCALE GENOMIC DNA]</scope>
    <source>
        <strain>NIES-843 / IAM M-247</strain>
    </source>
</reference>
<name>RS8_MICAN</name>
<proteinExistence type="inferred from homology"/>
<gene>
    <name evidence="1" type="primary">rpsH</name>
    <name evidence="1" type="synonym">rps8</name>
    <name type="ordered locus">MAE_57300</name>
</gene>
<organism>
    <name type="scientific">Microcystis aeruginosa (strain NIES-843 / IAM M-2473)</name>
    <dbReference type="NCBI Taxonomy" id="449447"/>
    <lineage>
        <taxon>Bacteria</taxon>
        <taxon>Bacillati</taxon>
        <taxon>Cyanobacteriota</taxon>
        <taxon>Cyanophyceae</taxon>
        <taxon>Oscillatoriophycideae</taxon>
        <taxon>Chroococcales</taxon>
        <taxon>Microcystaceae</taxon>
        <taxon>Microcystis</taxon>
    </lineage>
</organism>